<keyword id="KW-0665">Pyrimidine biosynthesis</keyword>
<keyword id="KW-0808">Transferase</keyword>
<comment type="function">
    <text evidence="1">Catalyzes the condensation of carbamoyl phosphate and aspartate to form carbamoyl aspartate and inorganic phosphate, the committed step in the de novo pyrimidine nucleotide biosynthesis pathway.</text>
</comment>
<comment type="catalytic activity">
    <reaction evidence="1">
        <text>carbamoyl phosphate + L-aspartate = N-carbamoyl-L-aspartate + phosphate + H(+)</text>
        <dbReference type="Rhea" id="RHEA:20013"/>
        <dbReference type="ChEBI" id="CHEBI:15378"/>
        <dbReference type="ChEBI" id="CHEBI:29991"/>
        <dbReference type="ChEBI" id="CHEBI:32814"/>
        <dbReference type="ChEBI" id="CHEBI:43474"/>
        <dbReference type="ChEBI" id="CHEBI:58228"/>
        <dbReference type="EC" id="2.1.3.2"/>
    </reaction>
</comment>
<comment type="pathway">
    <text evidence="1">Pyrimidine metabolism; UMP biosynthesis via de novo pathway; (S)-dihydroorotate from bicarbonate: step 2/3.</text>
</comment>
<comment type="subunit">
    <text evidence="1">Heterododecamer (2C3:3R2) of six catalytic PyrB chains organized as two trimers (C3), and six regulatory PyrI chains organized as three dimers (R2).</text>
</comment>
<comment type="similarity">
    <text evidence="1">Belongs to the aspartate/ornithine carbamoyltransferase superfamily. ATCase family.</text>
</comment>
<dbReference type="EC" id="2.1.3.2" evidence="1"/>
<dbReference type="EMBL" id="CP000607">
    <property type="protein sequence ID" value="ABP36570.1"/>
    <property type="molecule type" value="Genomic_DNA"/>
</dbReference>
<dbReference type="SMR" id="A4SDL1"/>
<dbReference type="STRING" id="290318.Cvib_0548"/>
<dbReference type="KEGG" id="pvi:Cvib_0548"/>
<dbReference type="eggNOG" id="COG0540">
    <property type="taxonomic scope" value="Bacteria"/>
</dbReference>
<dbReference type="HOGENOM" id="CLU_043846_2_0_10"/>
<dbReference type="OrthoDB" id="9774690at2"/>
<dbReference type="UniPathway" id="UPA00070">
    <property type="reaction ID" value="UER00116"/>
</dbReference>
<dbReference type="GO" id="GO:0005829">
    <property type="term" value="C:cytosol"/>
    <property type="evidence" value="ECO:0007669"/>
    <property type="project" value="TreeGrafter"/>
</dbReference>
<dbReference type="GO" id="GO:0016597">
    <property type="term" value="F:amino acid binding"/>
    <property type="evidence" value="ECO:0007669"/>
    <property type="project" value="InterPro"/>
</dbReference>
<dbReference type="GO" id="GO:0004070">
    <property type="term" value="F:aspartate carbamoyltransferase activity"/>
    <property type="evidence" value="ECO:0007669"/>
    <property type="project" value="UniProtKB-UniRule"/>
</dbReference>
<dbReference type="GO" id="GO:0006207">
    <property type="term" value="P:'de novo' pyrimidine nucleobase biosynthetic process"/>
    <property type="evidence" value="ECO:0007669"/>
    <property type="project" value="InterPro"/>
</dbReference>
<dbReference type="GO" id="GO:0044205">
    <property type="term" value="P:'de novo' UMP biosynthetic process"/>
    <property type="evidence" value="ECO:0007669"/>
    <property type="project" value="UniProtKB-UniRule"/>
</dbReference>
<dbReference type="GO" id="GO:0006520">
    <property type="term" value="P:amino acid metabolic process"/>
    <property type="evidence" value="ECO:0007669"/>
    <property type="project" value="InterPro"/>
</dbReference>
<dbReference type="Gene3D" id="3.40.50.1370">
    <property type="entry name" value="Aspartate/ornithine carbamoyltransferase"/>
    <property type="match status" value="2"/>
</dbReference>
<dbReference type="HAMAP" id="MF_00001">
    <property type="entry name" value="Asp_carb_tr"/>
    <property type="match status" value="1"/>
</dbReference>
<dbReference type="InterPro" id="IPR006132">
    <property type="entry name" value="Asp/Orn_carbamoyltranf_P-bd"/>
</dbReference>
<dbReference type="InterPro" id="IPR006130">
    <property type="entry name" value="Asp/Orn_carbamoylTrfase"/>
</dbReference>
<dbReference type="InterPro" id="IPR036901">
    <property type="entry name" value="Asp/Orn_carbamoylTrfase_sf"/>
</dbReference>
<dbReference type="InterPro" id="IPR002082">
    <property type="entry name" value="Asp_carbamoyltransf"/>
</dbReference>
<dbReference type="InterPro" id="IPR006131">
    <property type="entry name" value="Asp_carbamoyltransf_Asp/Orn-bd"/>
</dbReference>
<dbReference type="NCBIfam" id="TIGR00670">
    <property type="entry name" value="asp_carb_tr"/>
    <property type="match status" value="1"/>
</dbReference>
<dbReference type="NCBIfam" id="NF002032">
    <property type="entry name" value="PRK00856.1"/>
    <property type="match status" value="1"/>
</dbReference>
<dbReference type="PANTHER" id="PTHR45753:SF6">
    <property type="entry name" value="ASPARTATE CARBAMOYLTRANSFERASE"/>
    <property type="match status" value="1"/>
</dbReference>
<dbReference type="PANTHER" id="PTHR45753">
    <property type="entry name" value="ORNITHINE CARBAMOYLTRANSFERASE, MITOCHONDRIAL"/>
    <property type="match status" value="1"/>
</dbReference>
<dbReference type="Pfam" id="PF00185">
    <property type="entry name" value="OTCace"/>
    <property type="match status" value="1"/>
</dbReference>
<dbReference type="Pfam" id="PF02729">
    <property type="entry name" value="OTCace_N"/>
    <property type="match status" value="1"/>
</dbReference>
<dbReference type="PRINTS" id="PR00100">
    <property type="entry name" value="AOTCASE"/>
</dbReference>
<dbReference type="PRINTS" id="PR00101">
    <property type="entry name" value="ATCASE"/>
</dbReference>
<dbReference type="SUPFAM" id="SSF53671">
    <property type="entry name" value="Aspartate/ornithine carbamoyltransferase"/>
    <property type="match status" value="1"/>
</dbReference>
<dbReference type="PROSITE" id="PS00097">
    <property type="entry name" value="CARBAMOYLTRANSFERASE"/>
    <property type="match status" value="1"/>
</dbReference>
<name>PYRB_CHLPM</name>
<accession>A4SDL1</accession>
<proteinExistence type="inferred from homology"/>
<organism>
    <name type="scientific">Chlorobium phaeovibrioides (strain DSM 265 / 1930)</name>
    <name type="common">Prosthecochloris vibrioformis (strain DSM 265)</name>
    <dbReference type="NCBI Taxonomy" id="290318"/>
    <lineage>
        <taxon>Bacteria</taxon>
        <taxon>Pseudomonadati</taxon>
        <taxon>Chlorobiota</taxon>
        <taxon>Chlorobiia</taxon>
        <taxon>Chlorobiales</taxon>
        <taxon>Chlorobiaceae</taxon>
        <taxon>Chlorobium/Pelodictyon group</taxon>
        <taxon>Chlorobium</taxon>
    </lineage>
</organism>
<evidence type="ECO:0000255" key="1">
    <source>
        <dbReference type="HAMAP-Rule" id="MF_00001"/>
    </source>
</evidence>
<sequence>MNHLTGLSRLSADSITGLLDTAAGFKQTLRSPNASFSPTLKNRRIALVFFENSTRTRFSFEIAARNLGAGTLGFSAASSSVSKGETLSDTIKNLEAMQVDAFVLRHPSSGSAKLISRITPKPVINAGDGSNEHPTQALLDMFTLREHFGSLKGLKVTIIGDVLHSRVARSNIYGLLRAGAEVGLCGPVTLIPPDAEKLGVRLFTDLDRAIAWADTAIVLRLQLERASGTYLPSLEEYSRHYGLTDERLERTGKHLLVLHPGPINREIEISNHVADRIQPPGYSKSMLLEQVTNGIAIRMAVLETLLGGTP</sequence>
<reference key="1">
    <citation type="submission" date="2007-03" db="EMBL/GenBank/DDBJ databases">
        <title>Complete sequence of Prosthecochloris vibrioformis DSM 265.</title>
        <authorList>
            <consortium name="US DOE Joint Genome Institute"/>
            <person name="Copeland A."/>
            <person name="Lucas S."/>
            <person name="Lapidus A."/>
            <person name="Barry K."/>
            <person name="Detter J.C."/>
            <person name="Glavina del Rio T."/>
            <person name="Hammon N."/>
            <person name="Israni S."/>
            <person name="Pitluck S."/>
            <person name="Schmutz J."/>
            <person name="Larimer F."/>
            <person name="Land M."/>
            <person name="Hauser L."/>
            <person name="Mikhailova N."/>
            <person name="Li T."/>
            <person name="Overmann J."/>
            <person name="Schuster S.C."/>
            <person name="Bryant D.A."/>
            <person name="Richardson P."/>
        </authorList>
    </citation>
    <scope>NUCLEOTIDE SEQUENCE [LARGE SCALE GENOMIC DNA]</scope>
    <source>
        <strain>DSM 265 / 1930</strain>
    </source>
</reference>
<gene>
    <name evidence="1" type="primary">pyrB</name>
    <name type="ordered locus">Cvib_0548</name>
</gene>
<protein>
    <recommendedName>
        <fullName evidence="1">Aspartate carbamoyltransferase catalytic subunit</fullName>
        <ecNumber evidence="1">2.1.3.2</ecNumber>
    </recommendedName>
    <alternativeName>
        <fullName evidence="1">Aspartate transcarbamylase</fullName>
        <shortName evidence="1">ATCase</shortName>
    </alternativeName>
</protein>
<feature type="chain" id="PRO_1000073736" description="Aspartate carbamoyltransferase catalytic subunit">
    <location>
        <begin position="1"/>
        <end position="310"/>
    </location>
</feature>
<feature type="binding site" evidence="1">
    <location>
        <position position="55"/>
    </location>
    <ligand>
        <name>carbamoyl phosphate</name>
        <dbReference type="ChEBI" id="CHEBI:58228"/>
    </ligand>
</feature>
<feature type="binding site" evidence="1">
    <location>
        <position position="56"/>
    </location>
    <ligand>
        <name>carbamoyl phosphate</name>
        <dbReference type="ChEBI" id="CHEBI:58228"/>
    </ligand>
</feature>
<feature type="binding site" evidence="1">
    <location>
        <position position="83"/>
    </location>
    <ligand>
        <name>L-aspartate</name>
        <dbReference type="ChEBI" id="CHEBI:29991"/>
    </ligand>
</feature>
<feature type="binding site" evidence="1">
    <location>
        <position position="105"/>
    </location>
    <ligand>
        <name>carbamoyl phosphate</name>
        <dbReference type="ChEBI" id="CHEBI:58228"/>
    </ligand>
</feature>
<feature type="binding site" evidence="1">
    <location>
        <position position="133"/>
    </location>
    <ligand>
        <name>carbamoyl phosphate</name>
        <dbReference type="ChEBI" id="CHEBI:58228"/>
    </ligand>
</feature>
<feature type="binding site" evidence="1">
    <location>
        <position position="136"/>
    </location>
    <ligand>
        <name>carbamoyl phosphate</name>
        <dbReference type="ChEBI" id="CHEBI:58228"/>
    </ligand>
</feature>
<feature type="binding site" evidence="1">
    <location>
        <position position="166"/>
    </location>
    <ligand>
        <name>L-aspartate</name>
        <dbReference type="ChEBI" id="CHEBI:29991"/>
    </ligand>
</feature>
<feature type="binding site" evidence="1">
    <location>
        <position position="220"/>
    </location>
    <ligand>
        <name>L-aspartate</name>
        <dbReference type="ChEBI" id="CHEBI:29991"/>
    </ligand>
</feature>
<feature type="binding site" evidence="1">
    <location>
        <position position="261"/>
    </location>
    <ligand>
        <name>carbamoyl phosphate</name>
        <dbReference type="ChEBI" id="CHEBI:58228"/>
    </ligand>
</feature>
<feature type="binding site" evidence="1">
    <location>
        <position position="262"/>
    </location>
    <ligand>
        <name>carbamoyl phosphate</name>
        <dbReference type="ChEBI" id="CHEBI:58228"/>
    </ligand>
</feature>